<name>NUBP1_HUMAN</name>
<evidence type="ECO:0000250" key="1">
    <source>
        <dbReference type="UniProtKB" id="Q5I0L4"/>
    </source>
</evidence>
<evidence type="ECO:0000250" key="2">
    <source>
        <dbReference type="UniProtKB" id="Q9R060"/>
    </source>
</evidence>
<evidence type="ECO:0000255" key="3">
    <source>
        <dbReference type="HAMAP-Rule" id="MF_03038"/>
    </source>
</evidence>
<evidence type="ECO:0000269" key="4">
    <source>
    </source>
</evidence>
<evidence type="ECO:0000269" key="5">
    <source>
    </source>
</evidence>
<evidence type="ECO:0000269" key="6">
    <source>
    </source>
</evidence>
<evidence type="ECO:0000269" key="7">
    <source ref="2"/>
</evidence>
<evidence type="ECO:0000303" key="8">
    <source>
    </source>
</evidence>
<evidence type="ECO:0000305" key="9"/>
<evidence type="ECO:0007744" key="10">
    <source>
    </source>
</evidence>
<evidence type="ECO:0007744" key="11">
    <source>
    </source>
</evidence>
<evidence type="ECO:0007744" key="12">
    <source>
    </source>
</evidence>
<protein>
    <recommendedName>
        <fullName evidence="3">Cytosolic Fe-S cluster assembly factor NUBP1</fullName>
    </recommendedName>
    <alternativeName>
        <fullName evidence="3">Nucleotide-binding protein 1</fullName>
        <shortName evidence="3">NBP 1</shortName>
    </alternativeName>
</protein>
<dbReference type="EMBL" id="U01833">
    <property type="protein sequence ID" value="AAA61932.1"/>
    <property type="molecule type" value="mRNA"/>
</dbReference>
<dbReference type="EMBL" id="AK223204">
    <property type="protein sequence ID" value="BAD96924.1"/>
    <property type="molecule type" value="mRNA"/>
</dbReference>
<dbReference type="EMBL" id="BC100290">
    <property type="protein sequence ID" value="AAI00291.1"/>
    <property type="molecule type" value="mRNA"/>
</dbReference>
<dbReference type="EMBL" id="BC109322">
    <property type="protein sequence ID" value="AAI09323.1"/>
    <property type="molecule type" value="mRNA"/>
</dbReference>
<dbReference type="EMBL" id="BC109323">
    <property type="protein sequence ID" value="AAI09324.1"/>
    <property type="molecule type" value="mRNA"/>
</dbReference>
<dbReference type="CCDS" id="CCDS10543.1">
    <molecule id="P53384-1"/>
</dbReference>
<dbReference type="CCDS" id="CCDS61839.1">
    <molecule id="P53384-2"/>
</dbReference>
<dbReference type="PIR" id="JC4010">
    <property type="entry name" value="JC4010"/>
</dbReference>
<dbReference type="RefSeq" id="NP_001265435.1">
    <molecule id="P53384-2"/>
    <property type="nucleotide sequence ID" value="NM_001278506.2"/>
</dbReference>
<dbReference type="RefSeq" id="NP_002475.2">
    <molecule id="P53384-1"/>
    <property type="nucleotide sequence ID" value="NM_002484.4"/>
</dbReference>
<dbReference type="SMR" id="P53384"/>
<dbReference type="BioGRID" id="110762">
    <property type="interactions" value="100"/>
</dbReference>
<dbReference type="ComplexPortal" id="CPX-2823">
    <property type="entry name" value="NUBP1-NUBP2 iron-sulfur cluster assembly scaffold complex"/>
</dbReference>
<dbReference type="CORUM" id="P53384"/>
<dbReference type="FunCoup" id="P53384">
    <property type="interactions" value="690"/>
</dbReference>
<dbReference type="IntAct" id="P53384">
    <property type="interactions" value="25"/>
</dbReference>
<dbReference type="MINT" id="P53384"/>
<dbReference type="STRING" id="9606.ENSP00000283027"/>
<dbReference type="GlyGen" id="P53384">
    <property type="glycosylation" value="2 sites, 1 O-linked glycan (1 site)"/>
</dbReference>
<dbReference type="iPTMnet" id="P53384"/>
<dbReference type="PhosphoSitePlus" id="P53384"/>
<dbReference type="BioMuta" id="NUBP1"/>
<dbReference type="DMDM" id="257050984"/>
<dbReference type="jPOST" id="P53384"/>
<dbReference type="MassIVE" id="P53384"/>
<dbReference type="PaxDb" id="9606-ENSP00000283027"/>
<dbReference type="PeptideAtlas" id="P53384"/>
<dbReference type="ProteomicsDB" id="56579">
    <molecule id="P53384-1"/>
</dbReference>
<dbReference type="ProteomicsDB" id="56580">
    <molecule id="P53384-2"/>
</dbReference>
<dbReference type="Pumba" id="P53384"/>
<dbReference type="Antibodypedia" id="24622">
    <property type="antibodies" value="148 antibodies from 22 providers"/>
</dbReference>
<dbReference type="DNASU" id="4682"/>
<dbReference type="Ensembl" id="ENST00000283027.10">
    <molecule id="P53384-1"/>
    <property type="protein sequence ID" value="ENSP00000283027.5"/>
    <property type="gene ID" value="ENSG00000103274.11"/>
</dbReference>
<dbReference type="Ensembl" id="ENST00000433392.6">
    <molecule id="P53384-2"/>
    <property type="protein sequence ID" value="ENSP00000409654.2"/>
    <property type="gene ID" value="ENSG00000103274.11"/>
</dbReference>
<dbReference type="GeneID" id="4682"/>
<dbReference type="KEGG" id="hsa:4682"/>
<dbReference type="MANE-Select" id="ENST00000283027.10">
    <property type="protein sequence ID" value="ENSP00000283027.5"/>
    <property type="RefSeq nucleotide sequence ID" value="NM_002484.4"/>
    <property type="RefSeq protein sequence ID" value="NP_002475.2"/>
</dbReference>
<dbReference type="UCSC" id="uc002daa.3">
    <molecule id="P53384-1"/>
    <property type="organism name" value="human"/>
</dbReference>
<dbReference type="AGR" id="HGNC:8041"/>
<dbReference type="CTD" id="4682"/>
<dbReference type="DisGeNET" id="4682"/>
<dbReference type="GeneCards" id="NUBP1"/>
<dbReference type="HGNC" id="HGNC:8041">
    <property type="gene designation" value="NUBP1"/>
</dbReference>
<dbReference type="HPA" id="ENSG00000103274">
    <property type="expression patterns" value="Low tissue specificity"/>
</dbReference>
<dbReference type="MIM" id="600280">
    <property type="type" value="gene"/>
</dbReference>
<dbReference type="neXtProt" id="NX_P53384"/>
<dbReference type="OpenTargets" id="ENSG00000103274"/>
<dbReference type="PharmGKB" id="PA31823"/>
<dbReference type="VEuPathDB" id="HostDB:ENSG00000103274"/>
<dbReference type="eggNOG" id="KOG3022">
    <property type="taxonomic scope" value="Eukaryota"/>
</dbReference>
<dbReference type="GeneTree" id="ENSGT00950000183193"/>
<dbReference type="HOGENOM" id="CLU_024839_0_1_1"/>
<dbReference type="InParanoid" id="P53384"/>
<dbReference type="OMA" id="VSGCPMR"/>
<dbReference type="OrthoDB" id="1741334at2759"/>
<dbReference type="PAN-GO" id="P53384">
    <property type="GO annotations" value="3 GO annotations based on evolutionary models"/>
</dbReference>
<dbReference type="PhylomeDB" id="P53384"/>
<dbReference type="TreeFam" id="TF300755"/>
<dbReference type="PathwayCommons" id="P53384"/>
<dbReference type="Reactome" id="R-HSA-2564830">
    <property type="pathway name" value="Cytosolic iron-sulfur cluster assembly"/>
</dbReference>
<dbReference type="SignaLink" id="P53384"/>
<dbReference type="BioGRID-ORCS" id="4682">
    <property type="hits" value="774 hits in 1173 CRISPR screens"/>
</dbReference>
<dbReference type="ChiTaRS" id="NUBP1">
    <property type="organism name" value="human"/>
</dbReference>
<dbReference type="GenomeRNAi" id="4682"/>
<dbReference type="Pharos" id="P53384">
    <property type="development level" value="Tbio"/>
</dbReference>
<dbReference type="PRO" id="PR:P53384"/>
<dbReference type="Proteomes" id="UP000005640">
    <property type="component" value="Chromosome 16"/>
</dbReference>
<dbReference type="RNAct" id="P53384">
    <property type="molecule type" value="protein"/>
</dbReference>
<dbReference type="Bgee" id="ENSG00000103274">
    <property type="expression patterns" value="Expressed in monocyte and 180 other cell types or tissues"/>
</dbReference>
<dbReference type="ExpressionAtlas" id="P53384">
    <property type="expression patterns" value="baseline and differential"/>
</dbReference>
<dbReference type="GO" id="GO:0005814">
    <property type="term" value="C:centriole"/>
    <property type="evidence" value="ECO:0007669"/>
    <property type="project" value="UniProtKB-SubCell"/>
</dbReference>
<dbReference type="GO" id="GO:0005813">
    <property type="term" value="C:centrosome"/>
    <property type="evidence" value="ECO:0000314"/>
    <property type="project" value="HPA"/>
</dbReference>
<dbReference type="GO" id="GO:0005929">
    <property type="term" value="C:cilium"/>
    <property type="evidence" value="ECO:0007669"/>
    <property type="project" value="UniProtKB-KW"/>
</dbReference>
<dbReference type="GO" id="GO:0005829">
    <property type="term" value="C:cytosol"/>
    <property type="evidence" value="ECO:0000314"/>
    <property type="project" value="HPA"/>
</dbReference>
<dbReference type="GO" id="GO:0005794">
    <property type="term" value="C:Golgi apparatus"/>
    <property type="evidence" value="ECO:0000314"/>
    <property type="project" value="HPA"/>
</dbReference>
<dbReference type="GO" id="GO:0005634">
    <property type="term" value="C:nucleus"/>
    <property type="evidence" value="ECO:0007669"/>
    <property type="project" value="UniProtKB-SubCell"/>
</dbReference>
<dbReference type="GO" id="GO:0051539">
    <property type="term" value="F:4 iron, 4 sulfur cluster binding"/>
    <property type="evidence" value="ECO:0007669"/>
    <property type="project" value="UniProtKB-UniRule"/>
</dbReference>
<dbReference type="GO" id="GO:0005524">
    <property type="term" value="F:ATP binding"/>
    <property type="evidence" value="ECO:0007669"/>
    <property type="project" value="UniProtKB-KW"/>
</dbReference>
<dbReference type="GO" id="GO:0016887">
    <property type="term" value="F:ATP hydrolysis activity"/>
    <property type="evidence" value="ECO:0007669"/>
    <property type="project" value="InterPro"/>
</dbReference>
<dbReference type="GO" id="GO:0140663">
    <property type="term" value="F:ATP-dependent FeS chaperone activity"/>
    <property type="evidence" value="ECO:0007669"/>
    <property type="project" value="InterPro"/>
</dbReference>
<dbReference type="GO" id="GO:0051536">
    <property type="term" value="F:iron-sulfur cluster binding"/>
    <property type="evidence" value="ECO:0000314"/>
    <property type="project" value="UniProtKB"/>
</dbReference>
<dbReference type="GO" id="GO:0046872">
    <property type="term" value="F:metal ion binding"/>
    <property type="evidence" value="ECO:0007669"/>
    <property type="project" value="UniProtKB-KW"/>
</dbReference>
<dbReference type="GO" id="GO:0000166">
    <property type="term" value="F:nucleotide binding"/>
    <property type="evidence" value="ECO:0000304"/>
    <property type="project" value="ProtInc"/>
</dbReference>
<dbReference type="GO" id="GO:0030030">
    <property type="term" value="P:cell projection organization"/>
    <property type="evidence" value="ECO:0007669"/>
    <property type="project" value="UniProtKB-KW"/>
</dbReference>
<dbReference type="GO" id="GO:0051642">
    <property type="term" value="P:centrosome localization"/>
    <property type="evidence" value="ECO:0007669"/>
    <property type="project" value="Ensembl"/>
</dbReference>
<dbReference type="GO" id="GO:0006879">
    <property type="term" value="P:intracellular iron ion homeostasis"/>
    <property type="evidence" value="ECO:0000315"/>
    <property type="project" value="UniProtKB"/>
</dbReference>
<dbReference type="GO" id="GO:0016226">
    <property type="term" value="P:iron-sulfur cluster assembly"/>
    <property type="evidence" value="ECO:0000315"/>
    <property type="project" value="UniProtKB"/>
</dbReference>
<dbReference type="GO" id="GO:0010826">
    <property type="term" value="P:negative regulation of centrosome duplication"/>
    <property type="evidence" value="ECO:0007669"/>
    <property type="project" value="Ensembl"/>
</dbReference>
<dbReference type="GO" id="GO:0072697">
    <property type="term" value="P:protein localization to cell cortex"/>
    <property type="evidence" value="ECO:0007669"/>
    <property type="project" value="Ensembl"/>
</dbReference>
<dbReference type="GO" id="GO:0001558">
    <property type="term" value="P:regulation of cell growth"/>
    <property type="evidence" value="ECO:0000315"/>
    <property type="project" value="UniProtKB"/>
</dbReference>
<dbReference type="CDD" id="cd02037">
    <property type="entry name" value="Mrp_NBP35"/>
    <property type="match status" value="1"/>
</dbReference>
<dbReference type="FunFam" id="3.40.50.300:FF:000427">
    <property type="entry name" value="Cytosolic Fe-S cluster assembly factor NUBP1"/>
    <property type="match status" value="1"/>
</dbReference>
<dbReference type="Gene3D" id="3.40.50.300">
    <property type="entry name" value="P-loop containing nucleotide triphosphate hydrolases"/>
    <property type="match status" value="1"/>
</dbReference>
<dbReference type="HAMAP" id="MF_02040">
    <property type="entry name" value="Mrp_NBP35"/>
    <property type="match status" value="1"/>
</dbReference>
<dbReference type="HAMAP" id="MF_03038">
    <property type="entry name" value="NUBP1"/>
    <property type="match status" value="1"/>
</dbReference>
<dbReference type="InterPro" id="IPR003593">
    <property type="entry name" value="AAA+_ATPase"/>
</dbReference>
<dbReference type="InterPro" id="IPR000808">
    <property type="entry name" value="Mrp-like_CS"/>
</dbReference>
<dbReference type="InterPro" id="IPR019591">
    <property type="entry name" value="Mrp/NBP35_ATP-bd"/>
</dbReference>
<dbReference type="InterPro" id="IPR028601">
    <property type="entry name" value="NUBP1/Nbp35"/>
</dbReference>
<dbReference type="InterPro" id="IPR027417">
    <property type="entry name" value="P-loop_NTPase"/>
</dbReference>
<dbReference type="InterPro" id="IPR033756">
    <property type="entry name" value="YlxH/NBP35"/>
</dbReference>
<dbReference type="PANTHER" id="PTHR23264:SF35">
    <property type="entry name" value="CYTOSOLIC FE-S CLUSTER ASSEMBLY FACTOR NUBP1"/>
    <property type="match status" value="1"/>
</dbReference>
<dbReference type="PANTHER" id="PTHR23264">
    <property type="entry name" value="NUCLEOTIDE-BINDING PROTEIN NBP35 YEAST -RELATED"/>
    <property type="match status" value="1"/>
</dbReference>
<dbReference type="Pfam" id="PF10609">
    <property type="entry name" value="ParA"/>
    <property type="match status" value="1"/>
</dbReference>
<dbReference type="SMART" id="SM00382">
    <property type="entry name" value="AAA"/>
    <property type="match status" value="1"/>
</dbReference>
<dbReference type="SUPFAM" id="SSF52540">
    <property type="entry name" value="P-loop containing nucleoside triphosphate hydrolases"/>
    <property type="match status" value="1"/>
</dbReference>
<dbReference type="PROSITE" id="PS01215">
    <property type="entry name" value="MRP"/>
    <property type="match status" value="1"/>
</dbReference>
<organism>
    <name type="scientific">Homo sapiens</name>
    <name type="common">Human</name>
    <dbReference type="NCBI Taxonomy" id="9606"/>
    <lineage>
        <taxon>Eukaryota</taxon>
        <taxon>Metazoa</taxon>
        <taxon>Chordata</taxon>
        <taxon>Craniata</taxon>
        <taxon>Vertebrata</taxon>
        <taxon>Euteleostomi</taxon>
        <taxon>Mammalia</taxon>
        <taxon>Eutheria</taxon>
        <taxon>Euarchontoglires</taxon>
        <taxon>Primates</taxon>
        <taxon>Haplorrhini</taxon>
        <taxon>Catarrhini</taxon>
        <taxon>Hominidae</taxon>
        <taxon>Homo</taxon>
    </lineage>
</organism>
<proteinExistence type="evidence at protein level"/>
<feature type="chain" id="PRO_0000184943" description="Cytosolic Fe-S cluster assembly factor NUBP1">
    <location>
        <begin position="1"/>
        <end position="320"/>
    </location>
</feature>
<feature type="binding site" evidence="3">
    <location>
        <position position="8"/>
    </location>
    <ligand>
        <name>[4Fe-4S] cluster</name>
        <dbReference type="ChEBI" id="CHEBI:49883"/>
        <label>1</label>
    </ligand>
</feature>
<feature type="binding site" evidence="3">
    <location>
        <position position="22"/>
    </location>
    <ligand>
        <name>[4Fe-4S] cluster</name>
        <dbReference type="ChEBI" id="CHEBI:49883"/>
        <label>1</label>
    </ligand>
</feature>
<feature type="binding site" evidence="3">
    <location>
        <position position="25"/>
    </location>
    <ligand>
        <name>[4Fe-4S] cluster</name>
        <dbReference type="ChEBI" id="CHEBI:49883"/>
        <label>1</label>
    </ligand>
</feature>
<feature type="binding site" evidence="3">
    <location>
        <position position="31"/>
    </location>
    <ligand>
        <name>[4Fe-4S] cluster</name>
        <dbReference type="ChEBI" id="CHEBI:49883"/>
        <label>1</label>
    </ligand>
</feature>
<feature type="binding site" evidence="3">
    <location>
        <begin position="62"/>
        <end position="69"/>
    </location>
    <ligand>
        <name>ATP</name>
        <dbReference type="ChEBI" id="CHEBI:30616"/>
    </ligand>
</feature>
<feature type="binding site" evidence="3">
    <location>
        <position position="235"/>
    </location>
    <ligand>
        <name>[4Fe-4S] cluster</name>
        <dbReference type="ChEBI" id="CHEBI:49883"/>
        <label>2</label>
        <note>ligand shared with heterodimeric partner</note>
    </ligand>
</feature>
<feature type="binding site" evidence="3">
    <location>
        <position position="238"/>
    </location>
    <ligand>
        <name>[4Fe-4S] cluster</name>
        <dbReference type="ChEBI" id="CHEBI:49883"/>
        <label>2</label>
        <note>ligand shared with heterodimeric partner</note>
    </ligand>
</feature>
<feature type="modified residue" description="N-acetylmethionine" evidence="10 11 12">
    <location>
        <position position="1"/>
    </location>
</feature>
<feature type="modified residue" description="Phosphoserine" evidence="1">
    <location>
        <position position="319"/>
    </location>
</feature>
<feature type="splice variant" id="VSP_029043" description="In isoform 2." evidence="8">
    <location>
        <begin position="110"/>
        <end position="120"/>
    </location>
</feature>
<feature type="sequence variant" id="VAR_020359" description="In dbSNP:rs2233531." evidence="4 7">
    <original>P</original>
    <variation>A</variation>
    <location>
        <position position="39"/>
    </location>
</feature>
<feature type="sequence conflict" description="In Ref. 1; AAA61932." evidence="9" ref="1">
    <original>V</original>
    <variation>L</variation>
    <location>
        <position position="204"/>
    </location>
</feature>
<feature type="sequence conflict" description="In Ref. 1; AAA61932." evidence="9" ref="1">
    <original>G</original>
    <variation>P</variation>
    <location>
        <position position="232"/>
    </location>
</feature>
<reference key="1">
    <citation type="journal article" date="1994" name="Gene">
        <title>Cloning of a human cDNA encoding a putative nucleotide-binding protein related to Escherichia coli MinD.</title>
        <authorList>
            <person name="Shahrestanifar M."/>
            <person name="Saha D.P."/>
            <person name="Scala L.A."/>
            <person name="Basu A."/>
            <person name="Howells R.D."/>
        </authorList>
    </citation>
    <scope>NUCLEOTIDE SEQUENCE [MRNA] (ISOFORM 1)</scope>
</reference>
<reference key="2">
    <citation type="submission" date="2005-04" db="EMBL/GenBank/DDBJ databases">
        <authorList>
            <person name="Suzuki Y."/>
            <person name="Sugano S."/>
            <person name="Totoki Y."/>
            <person name="Toyoda A."/>
            <person name="Takeda T."/>
            <person name="Sakaki Y."/>
            <person name="Tanaka A."/>
            <person name="Yokoyama S."/>
        </authorList>
    </citation>
    <scope>NUCLEOTIDE SEQUENCE [LARGE SCALE MRNA] (ISOFORM 1)</scope>
    <scope>VARIANT ALA-39</scope>
    <source>
        <tissue>Spleen</tissue>
    </source>
</reference>
<reference key="3">
    <citation type="journal article" date="2004" name="Genome Res.">
        <title>The status, quality, and expansion of the NIH full-length cDNA project: the Mammalian Gene Collection (MGC).</title>
        <authorList>
            <consortium name="The MGC Project Team"/>
        </authorList>
    </citation>
    <scope>NUCLEOTIDE SEQUENCE [LARGE SCALE MRNA] (ISOFORMS 1 AND 2)</scope>
    <scope>VARIANT ALA-39</scope>
    <source>
        <tissue>Eye</tissue>
    </source>
</reference>
<reference key="4">
    <citation type="journal article" date="2008" name="Mol. Cell. Biol.">
        <title>Human Nbp35 is essential for both cytosolic iron-sulfur protein assembly and iron homeostasis.</title>
        <authorList>
            <person name="Stehling O."/>
            <person name="Netz D.J.A."/>
            <person name="Niggemeyer B."/>
            <person name="Roesser R."/>
            <person name="Eisenstein R.S."/>
            <person name="Puccio H."/>
            <person name="Pierik A.J."/>
            <person name="Lill R."/>
        </authorList>
    </citation>
    <scope>FUNCTION</scope>
    <scope>INTERACTION WITH NUBP2</scope>
    <scope>SUBCELLULAR LOCATION</scope>
    <scope>EPR SPECTROSCOPY OF IRON-SULFUR CLUSTERS</scope>
</reference>
<reference key="5">
    <citation type="journal article" date="2009" name="Anal. Chem.">
        <title>Lys-N and trypsin cover complementary parts of the phosphoproteome in a refined SCX-based approach.</title>
        <authorList>
            <person name="Gauci S."/>
            <person name="Helbig A.O."/>
            <person name="Slijper M."/>
            <person name="Krijgsveld J."/>
            <person name="Heck A.J."/>
            <person name="Mohammed S."/>
        </authorList>
    </citation>
    <scope>ACETYLATION [LARGE SCALE ANALYSIS] AT MET-1</scope>
    <scope>IDENTIFICATION BY MASS SPECTROMETRY [LARGE SCALE ANALYSIS]</scope>
</reference>
<reference key="6">
    <citation type="journal article" date="2011" name="BMC Syst. Biol.">
        <title>Initial characterization of the human central proteome.</title>
        <authorList>
            <person name="Burkard T.R."/>
            <person name="Planyavsky M."/>
            <person name="Kaupe I."/>
            <person name="Breitwieser F.P."/>
            <person name="Buerckstuemmer T."/>
            <person name="Bennett K.L."/>
            <person name="Superti-Furga G."/>
            <person name="Colinge J."/>
        </authorList>
    </citation>
    <scope>IDENTIFICATION BY MASS SPECTROMETRY [LARGE SCALE ANALYSIS]</scope>
</reference>
<reference key="7">
    <citation type="journal article" date="2012" name="Mol. Cell. Proteomics">
        <title>Comparative large-scale characterisation of plant vs. mammal proteins reveals similar and idiosyncratic N-alpha acetylation features.</title>
        <authorList>
            <person name="Bienvenut W.V."/>
            <person name="Sumpton D."/>
            <person name="Martinez A."/>
            <person name="Lilla S."/>
            <person name="Espagne C."/>
            <person name="Meinnel T."/>
            <person name="Giglione C."/>
        </authorList>
    </citation>
    <scope>ACETYLATION [LARGE SCALE ANALYSIS] AT MET-1</scope>
    <scope>IDENTIFICATION BY MASS SPECTROMETRY [LARGE SCALE ANALYSIS]</scope>
</reference>
<reference key="8">
    <citation type="journal article" date="2012" name="Proc. Natl. Acad. Sci. U.S.A.">
        <title>N-terminal acetylome analyses and functional insights of the N-terminal acetyltransferase NatB.</title>
        <authorList>
            <person name="Van Damme P."/>
            <person name="Lasa M."/>
            <person name="Polevoda B."/>
            <person name="Gazquez C."/>
            <person name="Elosegui-Artola A."/>
            <person name="Kim D.S."/>
            <person name="De Juan-Pardo E."/>
            <person name="Demeyer K."/>
            <person name="Hole K."/>
            <person name="Larrea E."/>
            <person name="Timmerman E."/>
            <person name="Prieto J."/>
            <person name="Arnesen T."/>
            <person name="Sherman F."/>
            <person name="Gevaert K."/>
            <person name="Aldabe R."/>
        </authorList>
    </citation>
    <scope>ACETYLATION [LARGE SCALE ANALYSIS] AT MET-1</scope>
    <scope>IDENTIFICATION BY MASS SPECTROMETRY [LARGE SCALE ANALYSIS]</scope>
</reference>
<reference key="9">
    <citation type="journal article" date="2018" name="J. Cell Sci.">
        <title>Fe-S cluster coordination of the chromokinesin KIF4A alters its subcellular localization during mitosis.</title>
        <authorList>
            <person name="Ben-Shimon L."/>
            <person name="Paul V.D."/>
            <person name="David-Kadoch G."/>
            <person name="Volpe M."/>
            <person name="Stuempfig M."/>
            <person name="Bill E."/>
            <person name="Muehlenhoff U."/>
            <person name="Lill R."/>
            <person name="Ben-Aroya S."/>
        </authorList>
    </citation>
    <scope>SUBCELLULAR LOCATION</scope>
</reference>
<accession>P53384</accession>
<accession>Q32M30</accession>
<accession>Q498A9</accession>
<accession>Q53FS7</accession>
<comment type="function">
    <text evidence="2 5">Component of the cytosolic iron-sulfur (Fe/S) protein assembly (CIA) machinery (PubMed:18573874). Required for maturation of extramitochondrial Fe-S proteins (PubMed:18573874). The NUBP1-NUBP2 heterotetramer forms a Fe-S scaffold complex, mediating the de novo assembly of an Fe-S cluster and its transfer to target apoproteins (PubMed:18573874). Implicated in the regulation of centrosome duplication (By similarity). Negatively regulates cilium formation and structure (By similarity).</text>
</comment>
<comment type="cofactor">
    <cofactor evidence="3">
        <name>[4Fe-4S] cluster</name>
        <dbReference type="ChEBI" id="CHEBI:49883"/>
    </cofactor>
    <text evidence="3">Binds 4 [4Fe-4S] clusters per heterotetramer. Contains two stable clusters in the N-termini of NUBP1 and two labile, bridging clusters between subunits of the NUBP1-NUBP2 heterotetramer.</text>
</comment>
<comment type="subunit">
    <text evidence="2 3 5">Heterotetramer of 2 NUBP1 and 2 NUBP2 chains (By similarity). Interacts with KIFC1 (By similarity). Interacts with NUBP2 (PubMed:18573874). Interacts with the BBS/CCT complex subunit CCT1 (By similarity).</text>
</comment>
<comment type="interaction">
    <interactant intactId="EBI-7391727">
        <id>P53384</id>
    </interactant>
    <interactant intactId="EBI-1048886">
        <id>Q9Y5Y2</id>
        <label>NUBP2</label>
    </interactant>
    <organismsDiffer>false</organismsDiffer>
    <experiments>2</experiments>
</comment>
<comment type="subcellular location">
    <subcellularLocation>
        <location evidence="3 5 6">Cytoplasm</location>
    </subcellularLocation>
    <subcellularLocation>
        <location evidence="2">Nucleus</location>
    </subcellularLocation>
    <subcellularLocation>
        <location evidence="2">Cell projection</location>
    </subcellularLocation>
    <subcellularLocation>
        <location evidence="2">Cytoplasm</location>
        <location evidence="2">Cytoskeleton</location>
        <location evidence="2">Cilium axoneme</location>
    </subcellularLocation>
    <subcellularLocation>
        <location evidence="2">Cytoplasm</location>
        <location evidence="2">Cytoskeleton</location>
        <location evidence="2">Cilium basal body</location>
    </subcellularLocation>
    <subcellularLocation>
        <location evidence="2">Cytoplasm</location>
        <location evidence="2">Cytoskeleton</location>
        <location evidence="2">Microtubule organizing center</location>
    </subcellularLocation>
    <subcellularLocation>
        <location evidence="2">Cytoplasm</location>
        <location evidence="2">Cytoskeleton</location>
        <location evidence="2">Microtubule organizing center</location>
        <location evidence="2">Centrosome</location>
        <location evidence="2">Centriole</location>
    </subcellularLocation>
    <subcellularLocation>
        <location>Cytoplasm</location>
        <location>Cytoskeleton</location>
        <location>Microtubule organizing center</location>
        <location>Centrosome</location>
    </subcellularLocation>
    <text evidence="2">Enriched in centrioles of microtubule asters during prophase, prometaphase and telophase stages of mitosis. Localized at centrioles and in the nucleus at interphase. Colocalizes with nubp-2 at prometaphase. Specifically localizes to the axenome of motile cilia as opposed to primary non-motile cilia. Localization is independent of NUBP2 and KIFC1.</text>
</comment>
<comment type="alternative products">
    <event type="alternative splicing"/>
    <isoform>
        <id>P53384-1</id>
        <name>1</name>
        <sequence type="displayed"/>
    </isoform>
    <isoform>
        <id>P53384-2</id>
        <name>2</name>
        <sequence type="described" ref="VSP_029043"/>
    </isoform>
</comment>
<comment type="similarity">
    <text evidence="3">Belongs to the Mrp/NBP35 ATP-binding proteins family. NUBP1/NBP35 subfamily.</text>
</comment>
<gene>
    <name evidence="3" type="primary">NUBP1</name>
    <name type="synonym">NBP</name>
    <name type="synonym">NBP1</name>
</gene>
<keyword id="KW-0004">4Fe-4S</keyword>
<keyword id="KW-0007">Acetylation</keyword>
<keyword id="KW-0025">Alternative splicing</keyword>
<keyword id="KW-0067">ATP-binding</keyword>
<keyword id="KW-0966">Cell projection</keyword>
<keyword id="KW-0969">Cilium</keyword>
<keyword id="KW-0970">Cilium biogenesis/degradation</keyword>
<keyword id="KW-0963">Cytoplasm</keyword>
<keyword id="KW-0206">Cytoskeleton</keyword>
<keyword id="KW-0408">Iron</keyword>
<keyword id="KW-0411">Iron-sulfur</keyword>
<keyword id="KW-0479">Metal-binding</keyword>
<keyword id="KW-0547">Nucleotide-binding</keyword>
<keyword id="KW-0539">Nucleus</keyword>
<keyword id="KW-0597">Phosphoprotein</keyword>
<keyword id="KW-1267">Proteomics identification</keyword>
<keyword id="KW-1185">Reference proteome</keyword>
<sequence length="320" mass="34534">MEEVPHDCPGADSAQAGRGASCQGCPNQRLCASGAGATPDTAIEEIKEKMKTVKHKILVLSGKGGVGKSTFSAHLAHGLAEDENTQIALLDIDICGPSIPKIMGLEGEQVHQSGSGWSPVYVEDNLGVMSVGFLLSSPDDAVIWRGPKKNGMIKQFLRDVDWGEVDYLIVDTPPGTSDEHLSVVRYLATAHIDGAVIITTPQEVSLQDVRKEINFCRKVKLPIIGVVENMSGFICPKCKKESQIFPPTTGGAELMCQDLEVPLLGRVPLDPLIGKNCDKGQSFFIDAPDSPATLAYRSIIQRIQEFCNLHQSKEENLISS</sequence>